<evidence type="ECO:0000256" key="1">
    <source>
        <dbReference type="SAM" id="MobiDB-lite"/>
    </source>
</evidence>
<evidence type="ECO:0000305" key="2"/>
<organism>
    <name type="scientific">Dictyostelium discoideum</name>
    <name type="common">Social amoeba</name>
    <dbReference type="NCBI Taxonomy" id="44689"/>
    <lineage>
        <taxon>Eukaryota</taxon>
        <taxon>Amoebozoa</taxon>
        <taxon>Evosea</taxon>
        <taxon>Eumycetozoa</taxon>
        <taxon>Dictyostelia</taxon>
        <taxon>Dictyosteliales</taxon>
        <taxon>Dictyosteliaceae</taxon>
        <taxon>Dictyostelium</taxon>
    </lineage>
</organism>
<reference key="1">
    <citation type="submission" date="1997-08" db="EMBL/GenBank/DDBJ databases">
        <authorList>
            <person name="Stege J.T."/>
            <person name="Loomis W.F."/>
        </authorList>
    </citation>
    <scope>NUCLEOTIDE SEQUENCE [GENOMIC DNA]</scope>
    <source>
        <strain>AX4</strain>
    </source>
</reference>
<reference key="2">
    <citation type="journal article" date="2002" name="Nature">
        <title>Sequence and analysis of chromosome 2 of Dictyostelium discoideum.</title>
        <authorList>
            <person name="Gloeckner G."/>
            <person name="Eichinger L."/>
            <person name="Szafranski K."/>
            <person name="Pachebat J.A."/>
            <person name="Bankier A.T."/>
            <person name="Dear P.H."/>
            <person name="Lehmann R."/>
            <person name="Baumgart C."/>
            <person name="Parra G."/>
            <person name="Abril J.F."/>
            <person name="Guigo R."/>
            <person name="Kumpf K."/>
            <person name="Tunggal B."/>
            <person name="Cox E.C."/>
            <person name="Quail M.A."/>
            <person name="Platzer M."/>
            <person name="Rosenthal A."/>
            <person name="Noegel A.A."/>
        </authorList>
    </citation>
    <scope>NUCLEOTIDE SEQUENCE [LARGE SCALE GENOMIC DNA]</scope>
    <source>
        <strain>AX4</strain>
    </source>
</reference>
<reference key="3">
    <citation type="journal article" date="2005" name="Nature">
        <title>The genome of the social amoeba Dictyostelium discoideum.</title>
        <authorList>
            <person name="Eichinger L."/>
            <person name="Pachebat J.A."/>
            <person name="Gloeckner G."/>
            <person name="Rajandream M.A."/>
            <person name="Sucgang R."/>
            <person name="Berriman M."/>
            <person name="Song J."/>
            <person name="Olsen R."/>
            <person name="Szafranski K."/>
            <person name="Xu Q."/>
            <person name="Tunggal B."/>
            <person name="Kummerfeld S."/>
            <person name="Madera M."/>
            <person name="Konfortov B.A."/>
            <person name="Rivero F."/>
            <person name="Bankier A.T."/>
            <person name="Lehmann R."/>
            <person name="Hamlin N."/>
            <person name="Davies R."/>
            <person name="Gaudet P."/>
            <person name="Fey P."/>
            <person name="Pilcher K."/>
            <person name="Chen G."/>
            <person name="Saunders D."/>
            <person name="Sodergren E.J."/>
            <person name="Davis P."/>
            <person name="Kerhornou A."/>
            <person name="Nie X."/>
            <person name="Hall N."/>
            <person name="Anjard C."/>
            <person name="Hemphill L."/>
            <person name="Bason N."/>
            <person name="Farbrother P."/>
            <person name="Desany B."/>
            <person name="Just E."/>
            <person name="Morio T."/>
            <person name="Rost R."/>
            <person name="Churcher C.M."/>
            <person name="Cooper J."/>
            <person name="Haydock S."/>
            <person name="van Driessche N."/>
            <person name="Cronin A."/>
            <person name="Goodhead I."/>
            <person name="Muzny D.M."/>
            <person name="Mourier T."/>
            <person name="Pain A."/>
            <person name="Lu M."/>
            <person name="Harper D."/>
            <person name="Lindsay R."/>
            <person name="Hauser H."/>
            <person name="James K.D."/>
            <person name="Quiles M."/>
            <person name="Madan Babu M."/>
            <person name="Saito T."/>
            <person name="Buchrieser C."/>
            <person name="Wardroper A."/>
            <person name="Felder M."/>
            <person name="Thangavelu M."/>
            <person name="Johnson D."/>
            <person name="Knights A."/>
            <person name="Loulseged H."/>
            <person name="Mungall K.L."/>
            <person name="Oliver K."/>
            <person name="Price C."/>
            <person name="Quail M.A."/>
            <person name="Urushihara H."/>
            <person name="Hernandez J."/>
            <person name="Rabbinowitsch E."/>
            <person name="Steffen D."/>
            <person name="Sanders M."/>
            <person name="Ma J."/>
            <person name="Kohara Y."/>
            <person name="Sharp S."/>
            <person name="Simmonds M.N."/>
            <person name="Spiegler S."/>
            <person name="Tivey A."/>
            <person name="Sugano S."/>
            <person name="White B."/>
            <person name="Walker D."/>
            <person name="Woodward J.R."/>
            <person name="Winckler T."/>
            <person name="Tanaka Y."/>
            <person name="Shaulsky G."/>
            <person name="Schleicher M."/>
            <person name="Weinstock G.M."/>
            <person name="Rosenthal A."/>
            <person name="Cox E.C."/>
            <person name="Chisholm R.L."/>
            <person name="Gibbs R.A."/>
            <person name="Loomis W.F."/>
            <person name="Platzer M."/>
            <person name="Kay R.R."/>
            <person name="Williams J.G."/>
            <person name="Dear P.H."/>
            <person name="Noegel A.A."/>
            <person name="Barrell B.G."/>
            <person name="Kuspa A."/>
        </authorList>
    </citation>
    <scope>NUCLEOTIDE SEQUENCE [LARGE SCALE GENOMIC DNA]</scope>
    <source>
        <strain>AX4</strain>
    </source>
</reference>
<accession>O15736</accession>
<accession>Q553S4</accession>
<keyword id="KW-1185">Reference proteome</keyword>
<keyword id="KW-0677">Repeat</keyword>
<keyword id="KW-0853">WD repeat</keyword>
<feature type="chain" id="PRO_0000051275" description="Protein tipD">
    <location>
        <begin position="1"/>
        <end position="612"/>
    </location>
</feature>
<feature type="repeat" description="WD 1">
    <location>
        <begin position="322"/>
        <end position="361"/>
    </location>
</feature>
<feature type="repeat" description="WD 2">
    <location>
        <begin position="364"/>
        <end position="403"/>
    </location>
</feature>
<feature type="repeat" description="WD 3">
    <location>
        <begin position="406"/>
        <end position="444"/>
    </location>
</feature>
<feature type="repeat" description="WD 4">
    <location>
        <begin position="447"/>
        <end position="486"/>
    </location>
</feature>
<feature type="repeat" description="WD 5">
    <location>
        <begin position="490"/>
        <end position="530"/>
    </location>
</feature>
<feature type="repeat" description="WD 6">
    <location>
        <begin position="535"/>
        <end position="576"/>
    </location>
</feature>
<feature type="repeat" description="WD 7">
    <location>
        <begin position="582"/>
        <end position="611"/>
    </location>
</feature>
<feature type="region of interest" description="Disordered" evidence="1">
    <location>
        <begin position="95"/>
        <end position="128"/>
    </location>
</feature>
<feature type="compositionally biased region" description="Low complexity" evidence="1">
    <location>
        <begin position="106"/>
        <end position="128"/>
    </location>
</feature>
<sequence length="612" mass="68747">MFSSQNNSYMMMMGGGGIGNINNNQFYSPIISTSAQSFNSIVEWKRDIIRQLNDRNQNQTNNYSEFMRIYTDLLKRERTLNDRTLLYEKEIVSLRNEKKTQQQPPSGSSKMDSSSSSSSSNRVSGMGSTIEEMEQKLFKLQEDLTNSYKRNADNASSILLLNDKNKDLQNELMSKEIEIERIRSTIQQDLDSIKRLEMVVIEKENVSQIIRDELSSLQTEFLHNESKVVKLEQENSSLVERWLRKKNEEASKMNEANDFYQKMVEQRDSTPAKAAVQLSESISNLVVKLPDANDVPIPIVLERGVFSSEAMLPSKAKKRWTGHNSEIYCMAFNSIGNLLATGGGDKCVKVWDVISGQQKSTLLGASQSIVSVSFSPNDESILGTSNDNSARLWNTELGRSRHTLTGHIGKVYTGKFINSNRVVTGSHDRTIKLWDLQKGYCTRTIFCFSSCNDLVILGGSGTHLASGHVDHSVRFWDSNAGEPTQVLSSIHEGQITSITNSPTNTNQILTNSRDHTLKIIDIRTFDTIRTFKDPEYRNGLNWTKASWSPDGRYIASGSIDGSICIWDATNGKTVKVLTKVHNNGSSVCCCSWSPLANIFISADKDKNIIQWE</sequence>
<dbReference type="EMBL" id="AF019236">
    <property type="protein sequence ID" value="AAB70659.1"/>
    <property type="molecule type" value="Genomic_DNA"/>
</dbReference>
<dbReference type="EMBL" id="AAFI02000013">
    <property type="protein sequence ID" value="EAL69727.1"/>
    <property type="molecule type" value="Genomic_DNA"/>
</dbReference>
<dbReference type="PIR" id="T08602">
    <property type="entry name" value="T08602"/>
</dbReference>
<dbReference type="RefSeq" id="XP_643673.1">
    <property type="nucleotide sequence ID" value="XM_638581.1"/>
</dbReference>
<dbReference type="SMR" id="O15736"/>
<dbReference type="BioGRID" id="1244942">
    <property type="interactions" value="2"/>
</dbReference>
<dbReference type="FunCoup" id="O15736">
    <property type="interactions" value="124"/>
</dbReference>
<dbReference type="STRING" id="44689.O15736"/>
<dbReference type="PaxDb" id="44689-DDB0215341"/>
<dbReference type="EnsemblProtists" id="EAL69727">
    <property type="protein sequence ID" value="EAL69727"/>
    <property type="gene ID" value="DDB_G0275323"/>
</dbReference>
<dbReference type="GeneID" id="8619939"/>
<dbReference type="KEGG" id="ddi:DDB_G0275323"/>
<dbReference type="dictyBase" id="DDB_G0275323">
    <property type="gene designation" value="tipD"/>
</dbReference>
<dbReference type="VEuPathDB" id="AmoebaDB:DDB_G0275323"/>
<dbReference type="eggNOG" id="KOG0288">
    <property type="taxonomic scope" value="Eukaryota"/>
</dbReference>
<dbReference type="HOGENOM" id="CLU_000288_57_10_1"/>
<dbReference type="InParanoid" id="O15736"/>
<dbReference type="OMA" id="WGRPCIS"/>
<dbReference type="PhylomeDB" id="O15736"/>
<dbReference type="Reactome" id="R-DDI-1632852">
    <property type="pathway name" value="Macroautophagy"/>
</dbReference>
<dbReference type="PRO" id="PR:O15736"/>
<dbReference type="Proteomes" id="UP000002195">
    <property type="component" value="Chromosome 2"/>
</dbReference>
<dbReference type="GO" id="GO:0034274">
    <property type="term" value="C:Atg12-Atg5-Atg16 complex"/>
    <property type="evidence" value="ECO:0000250"/>
    <property type="project" value="dictyBase"/>
</dbReference>
<dbReference type="GO" id="GO:0000421">
    <property type="term" value="C:autophagosome membrane"/>
    <property type="evidence" value="ECO:0000318"/>
    <property type="project" value="GO_Central"/>
</dbReference>
<dbReference type="GO" id="GO:0031012">
    <property type="term" value="C:extracellular matrix"/>
    <property type="evidence" value="ECO:0007005"/>
    <property type="project" value="dictyBase"/>
</dbReference>
<dbReference type="GO" id="GO:0034045">
    <property type="term" value="C:phagophore assembly site membrane"/>
    <property type="evidence" value="ECO:0000318"/>
    <property type="project" value="GO_Central"/>
</dbReference>
<dbReference type="GO" id="GO:0019776">
    <property type="term" value="F:Atg8-family ligase activity"/>
    <property type="evidence" value="ECO:0000250"/>
    <property type="project" value="dictyBase"/>
</dbReference>
<dbReference type="GO" id="GO:0043495">
    <property type="term" value="F:protein-membrane adaptor activity"/>
    <property type="evidence" value="ECO:0000318"/>
    <property type="project" value="GO_Central"/>
</dbReference>
<dbReference type="GO" id="GO:0000045">
    <property type="term" value="P:autophagosome assembly"/>
    <property type="evidence" value="ECO:0000315"/>
    <property type="project" value="dictyBase"/>
</dbReference>
<dbReference type="GO" id="GO:0097352">
    <property type="term" value="P:autophagosome maturation"/>
    <property type="evidence" value="ECO:0000315"/>
    <property type="project" value="dictyBase"/>
</dbReference>
<dbReference type="GO" id="GO:0031154">
    <property type="term" value="P:culmination involved in sorocarp development"/>
    <property type="evidence" value="ECO:0000315"/>
    <property type="project" value="dictyBase"/>
</dbReference>
<dbReference type="GO" id="GO:0016236">
    <property type="term" value="P:macroautophagy"/>
    <property type="evidence" value="ECO:0000315"/>
    <property type="project" value="dictyBase"/>
</dbReference>
<dbReference type="GO" id="GO:0006909">
    <property type="term" value="P:phagocytosis"/>
    <property type="evidence" value="ECO:0000315"/>
    <property type="project" value="dictyBase"/>
</dbReference>
<dbReference type="GO" id="GO:0006907">
    <property type="term" value="P:pinocytosis"/>
    <property type="evidence" value="ECO:0000315"/>
    <property type="project" value="dictyBase"/>
</dbReference>
<dbReference type="GO" id="GO:0043161">
    <property type="term" value="P:proteasome-mediated ubiquitin-dependent protein catabolic process"/>
    <property type="evidence" value="ECO:0000315"/>
    <property type="project" value="dictyBase"/>
</dbReference>
<dbReference type="GO" id="GO:0030587">
    <property type="term" value="P:sorocarp development"/>
    <property type="evidence" value="ECO:0007001"/>
    <property type="project" value="dictyBase"/>
</dbReference>
<dbReference type="CDD" id="cd22887">
    <property type="entry name" value="Atg16_CCD"/>
    <property type="match status" value="1"/>
</dbReference>
<dbReference type="CDD" id="cd00200">
    <property type="entry name" value="WD40"/>
    <property type="match status" value="1"/>
</dbReference>
<dbReference type="Gene3D" id="1.20.5.170">
    <property type="match status" value="1"/>
</dbReference>
<dbReference type="Gene3D" id="2.130.10.10">
    <property type="entry name" value="YVTN repeat-like/Quinoprotein amine dehydrogenase"/>
    <property type="match status" value="3"/>
</dbReference>
<dbReference type="InterPro" id="IPR045160">
    <property type="entry name" value="ATG16"/>
</dbReference>
<dbReference type="InterPro" id="IPR013923">
    <property type="entry name" value="Autophagy-rel_prot_16_dom"/>
</dbReference>
<dbReference type="InterPro" id="IPR020472">
    <property type="entry name" value="G-protein_beta_WD-40_rep"/>
</dbReference>
<dbReference type="InterPro" id="IPR015943">
    <property type="entry name" value="WD40/YVTN_repeat-like_dom_sf"/>
</dbReference>
<dbReference type="InterPro" id="IPR019775">
    <property type="entry name" value="WD40_repeat_CS"/>
</dbReference>
<dbReference type="InterPro" id="IPR036322">
    <property type="entry name" value="WD40_repeat_dom_sf"/>
</dbReference>
<dbReference type="InterPro" id="IPR001680">
    <property type="entry name" value="WD40_rpt"/>
</dbReference>
<dbReference type="PANTHER" id="PTHR19878">
    <property type="entry name" value="AUTOPHAGY PROTEIN 16-LIKE"/>
    <property type="match status" value="1"/>
</dbReference>
<dbReference type="PANTHER" id="PTHR19878:SF8">
    <property type="entry name" value="AUTOPHAGY-RELATED 16, ISOFORM F"/>
    <property type="match status" value="1"/>
</dbReference>
<dbReference type="Pfam" id="PF08614">
    <property type="entry name" value="ATG16"/>
    <property type="match status" value="1"/>
</dbReference>
<dbReference type="Pfam" id="PF00400">
    <property type="entry name" value="WD40"/>
    <property type="match status" value="6"/>
</dbReference>
<dbReference type="PRINTS" id="PR00320">
    <property type="entry name" value="GPROTEINBRPT"/>
</dbReference>
<dbReference type="SMART" id="SM00320">
    <property type="entry name" value="WD40"/>
    <property type="match status" value="7"/>
</dbReference>
<dbReference type="SUPFAM" id="SSF50978">
    <property type="entry name" value="WD40 repeat-like"/>
    <property type="match status" value="1"/>
</dbReference>
<dbReference type="PROSITE" id="PS00678">
    <property type="entry name" value="WD_REPEATS_1"/>
    <property type="match status" value="5"/>
</dbReference>
<dbReference type="PROSITE" id="PS50082">
    <property type="entry name" value="WD_REPEATS_2"/>
    <property type="match status" value="6"/>
</dbReference>
<dbReference type="PROSITE" id="PS50294">
    <property type="entry name" value="WD_REPEATS_REGION"/>
    <property type="match status" value="1"/>
</dbReference>
<gene>
    <name type="primary">tipD</name>
    <name type="ORF">DDB_G0275323</name>
</gene>
<name>TIPD_DICDI</name>
<proteinExistence type="inferred from homology"/>
<protein>
    <recommendedName>
        <fullName>Protein tipD</fullName>
    </recommendedName>
</protein>
<comment type="function">
    <text>Not known; disruption of the gene for tipD results in morphological defects.</text>
</comment>
<comment type="similarity">
    <text evidence="2">Belongs to the WD repeat tipD family.</text>
</comment>